<protein>
    <recommendedName>
        <fullName evidence="2">Adenylosuccinate synthetase</fullName>
        <shortName evidence="2">AMPSase</shortName>
        <shortName evidence="2">AdSS</shortName>
        <ecNumber evidence="2">6.3.4.4</ecNumber>
    </recommendedName>
    <alternativeName>
        <fullName evidence="2">IMP--aspartate ligase</fullName>
    </alternativeName>
</protein>
<gene>
    <name type="ORF">LinJ13.1120</name>
    <name type="ORF">LinJ_13_1090</name>
</gene>
<keyword id="KW-0963">Cytoplasm</keyword>
<keyword id="KW-0342">GTP-binding</keyword>
<keyword id="KW-0436">Ligase</keyword>
<keyword id="KW-0460">Magnesium</keyword>
<keyword id="KW-0479">Metal-binding</keyword>
<keyword id="KW-0547">Nucleotide-binding</keyword>
<keyword id="KW-0658">Purine biosynthesis</keyword>
<keyword id="KW-1185">Reference proteome</keyword>
<sequence length="710" mass="78411">MPVRRYGGRYNNSSPGVSNALSPSTTAGRPLSPSPAAGSKLASTHHDPVPQEAYYVNDEADAWHQQQAPFREPSVEVEVEMIDDEPPHGSQKSLSVAPYTANASSSSGRSKRNAITASGYTFYTNERQKTVYEALRSLRPLAELQEPRRVKEYAETSLKDSLYRIIEAHDVIMVAGAFFGDEGKGKTVDAVAHHPLCTCIARVNSGENAGHTVYDKAGRKFVFNLAPSGLLLPGKRNYIGPECVMDPVSFMEKEIIQLIDAGIDYRDRLFIGNVCIVTPYHKLLDLLGSAANSSTLKGMAPVHGSKVMKRGIRLDHIFNDDETLRKRLEKDMDTYLGLLKVKNLSDADVVRLCREENSDGVVRVPDYVIAFAQAKDKVEFLVKLYRDRVRHNPDFPARCDVTYELHAAVLRGEKVLLEGPQSYWLSNARTKFWESTTSADTTAAGLLAASQLNFQKFKSVVLNVHKAPGSSRVGIGACPSSFVPQDYFSAQNIKTLRDLPSETCANFEAVQRTLFRDGFPHSNDKARHNGIMAPVEYSDETGKYNIGVAMAIASAQHHGECGAVTKKPRVCGFFDCVLQHEVNSIQGPYLTISALDRGDEYDKVGVTIAYVYYNPEGKQVDVNGHVYKNGDIIRAGDPVPSEPALYHCHPIVKLIDGWRDNPIAAAKRRRNAPLPRGVCELLSTIEYFTNCKILSIGNGPNGDDIIYLRQ</sequence>
<feature type="chain" id="PRO_0000399303" description="Adenylosuccinate synthetase">
    <location>
        <begin position="1"/>
        <end position="710"/>
    </location>
</feature>
<feature type="region of interest" description="Disordered" evidence="3">
    <location>
        <begin position="1"/>
        <end position="51"/>
    </location>
</feature>
<feature type="region of interest" description="Disordered" evidence="3">
    <location>
        <begin position="84"/>
        <end position="111"/>
    </location>
</feature>
<feature type="compositionally biased region" description="Polar residues" evidence="3">
    <location>
        <begin position="10"/>
        <end position="27"/>
    </location>
</feature>
<feature type="compositionally biased region" description="Polar residues" evidence="3">
    <location>
        <begin position="101"/>
        <end position="111"/>
    </location>
</feature>
<feature type="active site" description="Proton acceptor" evidence="2">
    <location>
        <position position="181"/>
    </location>
</feature>
<feature type="active site" description="Proton donor" evidence="2">
    <location>
        <position position="211"/>
    </location>
</feature>
<feature type="binding site" evidence="2">
    <location>
        <begin position="180"/>
        <end position="186"/>
    </location>
    <ligand>
        <name>GTP</name>
        <dbReference type="ChEBI" id="CHEBI:37565"/>
    </ligand>
</feature>
<feature type="binding site" description="in other chain" evidence="2">
    <location>
        <begin position="181"/>
        <end position="184"/>
    </location>
    <ligand>
        <name>IMP</name>
        <dbReference type="ChEBI" id="CHEBI:58053"/>
        <note>ligand shared between dimeric partners</note>
    </ligand>
</feature>
<feature type="binding site" evidence="2">
    <location>
        <position position="181"/>
    </location>
    <ligand>
        <name>Mg(2+)</name>
        <dbReference type="ChEBI" id="CHEBI:18420"/>
    </ligand>
</feature>
<feature type="binding site" description="in other chain" evidence="2">
    <location>
        <begin position="208"/>
        <end position="211"/>
    </location>
    <ligand>
        <name>IMP</name>
        <dbReference type="ChEBI" id="CHEBI:58053"/>
        <note>ligand shared between dimeric partners</note>
    </ligand>
</feature>
<feature type="binding site" evidence="2">
    <location>
        <begin position="210"/>
        <end position="212"/>
    </location>
    <ligand>
        <name>GTP</name>
        <dbReference type="ChEBI" id="CHEBI:37565"/>
    </ligand>
</feature>
<feature type="binding site" evidence="2">
    <location>
        <position position="210"/>
    </location>
    <ligand>
        <name>Mg(2+)</name>
        <dbReference type="ChEBI" id="CHEBI:18420"/>
    </ligand>
</feature>
<feature type="binding site" description="in other chain" evidence="2">
    <location>
        <position position="295"/>
    </location>
    <ligand>
        <name>IMP</name>
        <dbReference type="ChEBI" id="CHEBI:58053"/>
        <note>ligand shared between dimeric partners</note>
    </ligand>
</feature>
<feature type="binding site" evidence="2">
    <location>
        <position position="309"/>
    </location>
    <ligand>
        <name>IMP</name>
        <dbReference type="ChEBI" id="CHEBI:58053"/>
        <note>ligand shared between dimeric partners</note>
    </ligand>
</feature>
<feature type="binding site" description="in other chain" evidence="2">
    <location>
        <position position="421"/>
    </location>
    <ligand>
        <name>IMP</name>
        <dbReference type="ChEBI" id="CHEBI:58053"/>
        <note>ligand shared between dimeric partners</note>
    </ligand>
</feature>
<feature type="binding site" description="in other chain" evidence="2">
    <location>
        <position position="437"/>
    </location>
    <ligand>
        <name>IMP</name>
        <dbReference type="ChEBI" id="CHEBI:58053"/>
        <note>ligand shared between dimeric partners</note>
    </ligand>
</feature>
<feature type="binding site" evidence="2">
    <location>
        <begin position="563"/>
        <end position="569"/>
    </location>
    <ligand>
        <name>substrate</name>
    </ligand>
</feature>
<feature type="binding site" description="in other chain" evidence="2">
    <location>
        <position position="567"/>
    </location>
    <ligand>
        <name>IMP</name>
        <dbReference type="ChEBI" id="CHEBI:58053"/>
        <note>ligand shared between dimeric partners</note>
    </ligand>
</feature>
<feature type="binding site" evidence="2">
    <location>
        <position position="569"/>
    </location>
    <ligand>
        <name>GTP</name>
        <dbReference type="ChEBI" id="CHEBI:37565"/>
    </ligand>
</feature>
<feature type="binding site" evidence="2">
    <location>
        <begin position="697"/>
        <end position="699"/>
    </location>
    <ligand>
        <name>GTP</name>
        <dbReference type="ChEBI" id="CHEBI:37565"/>
    </ligand>
</feature>
<evidence type="ECO:0000250" key="1"/>
<evidence type="ECO:0000255" key="2">
    <source>
        <dbReference type="HAMAP-Rule" id="MF_03125"/>
    </source>
</evidence>
<evidence type="ECO:0000256" key="3">
    <source>
        <dbReference type="SAM" id="MobiDB-lite"/>
    </source>
</evidence>
<accession>A4HVP7</accession>
<dbReference type="EC" id="6.3.4.4" evidence="2"/>
<dbReference type="EMBL" id="FR796445">
    <property type="protein sequence ID" value="CAM66514.1"/>
    <property type="molecule type" value="Genomic_DNA"/>
</dbReference>
<dbReference type="RefSeq" id="XP_001464138.1">
    <property type="nucleotide sequence ID" value="XM_001464101.1"/>
</dbReference>
<dbReference type="SMR" id="A4HVP7"/>
<dbReference type="FunCoup" id="A4HVP7">
    <property type="interactions" value="391"/>
</dbReference>
<dbReference type="STRING" id="5671.A4HVP7"/>
<dbReference type="GeneID" id="5067520"/>
<dbReference type="KEGG" id="lif:LINJ_13_1090"/>
<dbReference type="VEuPathDB" id="TriTrypDB:LINF_130016900"/>
<dbReference type="eggNOG" id="KOG1355">
    <property type="taxonomic scope" value="Eukaryota"/>
</dbReference>
<dbReference type="InParanoid" id="A4HVP7"/>
<dbReference type="OMA" id="YIGPECV"/>
<dbReference type="UniPathway" id="UPA00075">
    <property type="reaction ID" value="UER00335"/>
</dbReference>
<dbReference type="Proteomes" id="UP000008153">
    <property type="component" value="Chromosome 13"/>
</dbReference>
<dbReference type="GO" id="GO:0005737">
    <property type="term" value="C:cytoplasm"/>
    <property type="evidence" value="ECO:0007669"/>
    <property type="project" value="UniProtKB-SubCell"/>
</dbReference>
<dbReference type="GO" id="GO:0004019">
    <property type="term" value="F:adenylosuccinate synthase activity"/>
    <property type="evidence" value="ECO:0007669"/>
    <property type="project" value="UniProtKB-UniRule"/>
</dbReference>
<dbReference type="GO" id="GO:0005525">
    <property type="term" value="F:GTP binding"/>
    <property type="evidence" value="ECO:0007669"/>
    <property type="project" value="UniProtKB-UniRule"/>
</dbReference>
<dbReference type="GO" id="GO:0000287">
    <property type="term" value="F:magnesium ion binding"/>
    <property type="evidence" value="ECO:0007669"/>
    <property type="project" value="UniProtKB-UniRule"/>
</dbReference>
<dbReference type="GO" id="GO:0044208">
    <property type="term" value="P:'de novo' AMP biosynthetic process"/>
    <property type="evidence" value="ECO:0007669"/>
    <property type="project" value="UniProtKB-UniRule"/>
</dbReference>
<dbReference type="GO" id="GO:0046040">
    <property type="term" value="P:IMP metabolic process"/>
    <property type="evidence" value="ECO:0007669"/>
    <property type="project" value="TreeGrafter"/>
</dbReference>
<dbReference type="FunFam" id="1.10.300.10:FF:000005">
    <property type="entry name" value="Adenylosuccinate synthetase"/>
    <property type="match status" value="1"/>
</dbReference>
<dbReference type="FunFam" id="3.90.170.10:FF:000003">
    <property type="entry name" value="Adenylosuccinate synthetase"/>
    <property type="match status" value="1"/>
</dbReference>
<dbReference type="Gene3D" id="3.40.440.10">
    <property type="entry name" value="Adenylosuccinate Synthetase, subunit A, domain 1"/>
    <property type="match status" value="1"/>
</dbReference>
<dbReference type="Gene3D" id="1.10.300.10">
    <property type="entry name" value="Adenylosuccinate Synthetase, subunit A, domain 2"/>
    <property type="match status" value="1"/>
</dbReference>
<dbReference type="Gene3D" id="3.90.170.10">
    <property type="entry name" value="Adenylosuccinate Synthetase, subunit A, domain 3"/>
    <property type="match status" value="1"/>
</dbReference>
<dbReference type="HAMAP" id="MF_00011">
    <property type="entry name" value="Adenylosucc_synth"/>
    <property type="match status" value="1"/>
</dbReference>
<dbReference type="InterPro" id="IPR018220">
    <property type="entry name" value="Adenylosuccin_syn_GTP-bd"/>
</dbReference>
<dbReference type="InterPro" id="IPR042109">
    <property type="entry name" value="Adenylosuccinate_synth_dom1"/>
</dbReference>
<dbReference type="InterPro" id="IPR042110">
    <property type="entry name" value="Adenylosuccinate_synth_dom2"/>
</dbReference>
<dbReference type="InterPro" id="IPR042111">
    <property type="entry name" value="Adenylosuccinate_synth_dom3"/>
</dbReference>
<dbReference type="InterPro" id="IPR001114">
    <property type="entry name" value="Adenylosuccinate_synthetase"/>
</dbReference>
<dbReference type="InterPro" id="IPR027417">
    <property type="entry name" value="P-loop_NTPase"/>
</dbReference>
<dbReference type="PANTHER" id="PTHR11846">
    <property type="entry name" value="ADENYLOSUCCINATE SYNTHETASE"/>
    <property type="match status" value="1"/>
</dbReference>
<dbReference type="PANTHER" id="PTHR11846:SF0">
    <property type="entry name" value="ADENYLOSUCCINATE SYNTHETASE"/>
    <property type="match status" value="1"/>
</dbReference>
<dbReference type="Pfam" id="PF00709">
    <property type="entry name" value="Adenylsucc_synt"/>
    <property type="match status" value="1"/>
</dbReference>
<dbReference type="SMART" id="SM00788">
    <property type="entry name" value="Adenylsucc_synt"/>
    <property type="match status" value="1"/>
</dbReference>
<dbReference type="SUPFAM" id="SSF52540">
    <property type="entry name" value="P-loop containing nucleoside triphosphate hydrolases"/>
    <property type="match status" value="1"/>
</dbReference>
<dbReference type="PROSITE" id="PS01266">
    <property type="entry name" value="ADENYLOSUCCIN_SYN_1"/>
    <property type="match status" value="1"/>
</dbReference>
<proteinExistence type="inferred from homology"/>
<reference key="1">
    <citation type="journal article" date="2007" name="Nat. Genet.">
        <title>Comparative genomic analysis of three Leishmania species that cause diverse human disease.</title>
        <authorList>
            <person name="Peacock C.S."/>
            <person name="Seeger K."/>
            <person name="Harris D."/>
            <person name="Murphy L."/>
            <person name="Ruiz J.C."/>
            <person name="Quail M.A."/>
            <person name="Peters N."/>
            <person name="Adlem E."/>
            <person name="Tivey A."/>
            <person name="Aslett M."/>
            <person name="Kerhornou A."/>
            <person name="Ivens A."/>
            <person name="Fraser A."/>
            <person name="Rajandream M.-A."/>
            <person name="Carver T."/>
            <person name="Norbertczak H."/>
            <person name="Chillingworth T."/>
            <person name="Hance Z."/>
            <person name="Jagels K."/>
            <person name="Moule S."/>
            <person name="Ormond D."/>
            <person name="Rutter S."/>
            <person name="Sqaures R."/>
            <person name="Whitehead S."/>
            <person name="Rabbinowitsch E."/>
            <person name="Arrowsmith C."/>
            <person name="White B."/>
            <person name="Thurston S."/>
            <person name="Bringaud F."/>
            <person name="Baldauf S.L."/>
            <person name="Faulconbridge A."/>
            <person name="Jeffares D."/>
            <person name="Depledge D.P."/>
            <person name="Oyola S.O."/>
            <person name="Hilley J.D."/>
            <person name="Brito L.O."/>
            <person name="Tosi L.R.O."/>
            <person name="Barrell B."/>
            <person name="Cruz A.K."/>
            <person name="Mottram J.C."/>
            <person name="Smith D.F."/>
            <person name="Berriman M."/>
        </authorList>
    </citation>
    <scope>NUCLEOTIDE SEQUENCE [LARGE SCALE GENOMIC DNA]</scope>
    <source>
        <strain>JPCM5</strain>
    </source>
</reference>
<name>PURA_LEIIN</name>
<comment type="function">
    <text evidence="1">Plays an important role in the salvage pathway for purine nucleotide biosynthesis. Catalyzes the first committed step in the biosynthesis of AMP from IMP (By similarity).</text>
</comment>
<comment type="catalytic activity">
    <reaction evidence="2">
        <text>IMP + L-aspartate + GTP = N(6)-(1,2-dicarboxyethyl)-AMP + GDP + phosphate + 2 H(+)</text>
        <dbReference type="Rhea" id="RHEA:15753"/>
        <dbReference type="ChEBI" id="CHEBI:15378"/>
        <dbReference type="ChEBI" id="CHEBI:29991"/>
        <dbReference type="ChEBI" id="CHEBI:37565"/>
        <dbReference type="ChEBI" id="CHEBI:43474"/>
        <dbReference type="ChEBI" id="CHEBI:57567"/>
        <dbReference type="ChEBI" id="CHEBI:58053"/>
        <dbReference type="ChEBI" id="CHEBI:58189"/>
        <dbReference type="EC" id="6.3.4.4"/>
    </reaction>
</comment>
<comment type="cofactor">
    <cofactor evidence="2">
        <name>Mg(2+)</name>
        <dbReference type="ChEBI" id="CHEBI:18420"/>
    </cofactor>
    <text evidence="2">Binds 1 Mg(2+) ion per subunit.</text>
</comment>
<comment type="pathway">
    <text evidence="2">Purine metabolism; AMP biosynthesis via de novo pathway; AMP from IMP: step 1/2.</text>
</comment>
<comment type="subunit">
    <text evidence="2">Homodimer.</text>
</comment>
<comment type="subcellular location">
    <subcellularLocation>
        <location evidence="2">Cytoplasm</location>
    </subcellularLocation>
</comment>
<comment type="miscellaneous">
    <text>Parasitic protozoa lack the de novo purine biosynthesis pathway and rely exclusively on the salvage pathway for their purine nucleotide requirements.</text>
</comment>
<comment type="similarity">
    <text evidence="2">Belongs to the adenylosuccinate synthetase family.</text>
</comment>
<organism>
    <name type="scientific">Leishmania infantum</name>
    <dbReference type="NCBI Taxonomy" id="5671"/>
    <lineage>
        <taxon>Eukaryota</taxon>
        <taxon>Discoba</taxon>
        <taxon>Euglenozoa</taxon>
        <taxon>Kinetoplastea</taxon>
        <taxon>Metakinetoplastina</taxon>
        <taxon>Trypanosomatida</taxon>
        <taxon>Trypanosomatidae</taxon>
        <taxon>Leishmaniinae</taxon>
        <taxon>Leishmania</taxon>
    </lineage>
</organism>